<feature type="chain" id="PRO_0000048092" description="DNA-directed RNA polymerase III subunit RPC2">
    <location>
        <begin position="1"/>
        <end position="1133"/>
    </location>
</feature>
<feature type="zinc finger region" description="C4-type" evidence="12 13 14 21 22 23">
    <location>
        <begin position="1080"/>
        <end position="1095"/>
    </location>
</feature>
<feature type="binding site" evidence="16 24">
    <location>
        <position position="186"/>
    </location>
    <ligand>
        <name>RNA</name>
        <dbReference type="ChEBI" id="CHEBI:33697"/>
    </ligand>
</feature>
<feature type="binding site" evidence="12 21">
    <location>
        <position position="195"/>
    </location>
    <ligand>
        <name>DNA</name>
        <dbReference type="ChEBI" id="CHEBI:16991"/>
        <label>nontemplate strand</label>
    </ligand>
</feature>
<feature type="binding site" evidence="16 24">
    <location>
        <position position="213"/>
    </location>
    <ligand>
        <name>RNA</name>
        <dbReference type="ChEBI" id="CHEBI:33697"/>
    </ligand>
</feature>
<feature type="binding site" evidence="16 24">
    <location>
        <position position="432"/>
    </location>
    <ligand>
        <name>DNA</name>
        <dbReference type="ChEBI" id="CHEBI:16991"/>
        <label>nontemplate strand</label>
    </ligand>
</feature>
<feature type="binding site" evidence="14 23">
    <location>
        <position position="438"/>
    </location>
    <ligand>
        <name>RNA</name>
        <dbReference type="ChEBI" id="CHEBI:33697"/>
    </ligand>
</feature>
<feature type="binding site" evidence="12 13 16 21 22 24">
    <location>
        <position position="692"/>
    </location>
    <ligand>
        <name>RNA</name>
        <dbReference type="ChEBI" id="CHEBI:33697"/>
    </ligand>
</feature>
<feature type="binding site" evidence="2 3">
    <location>
        <position position="753"/>
    </location>
    <ligand>
        <name>Mg(2+)</name>
        <dbReference type="ChEBI" id="CHEBI:18420"/>
        <note>ligand shared with POLR3A/RPC1</note>
    </ligand>
</feature>
<feature type="binding site" evidence="14 16 23 24">
    <location>
        <position position="896"/>
    </location>
    <ligand>
        <name>RNA</name>
        <dbReference type="ChEBI" id="CHEBI:33697"/>
    </ligand>
</feature>
<feature type="binding site" evidence="12 13 21 22">
    <location>
        <position position="904"/>
    </location>
    <ligand>
        <name>RNA</name>
        <dbReference type="ChEBI" id="CHEBI:33697"/>
    </ligand>
</feature>
<feature type="binding site" evidence="16 24">
    <location>
        <position position="1019"/>
    </location>
    <ligand>
        <name>RNA</name>
        <dbReference type="ChEBI" id="CHEBI:33697"/>
    </ligand>
</feature>
<feature type="binding site" evidence="13 14 22 23">
    <location>
        <position position="1039"/>
    </location>
    <ligand>
        <name>DNA</name>
        <dbReference type="ChEBI" id="CHEBI:16991"/>
        <label>template strand</label>
    </ligand>
</feature>
<feature type="binding site" evidence="12 21">
    <location>
        <position position="1040"/>
    </location>
    <ligand>
        <name>DNA</name>
        <dbReference type="ChEBI" id="CHEBI:16991"/>
        <label>template strand</label>
    </ligand>
</feature>
<feature type="binding site" evidence="16 24">
    <location>
        <position position="1046"/>
    </location>
    <ligand>
        <name>DNA</name>
        <dbReference type="ChEBI" id="CHEBI:16991"/>
        <label>template strand</label>
    </ligand>
</feature>
<feature type="binding site" evidence="12 13 14 21 22 23">
    <location>
        <position position="1080"/>
    </location>
    <ligand>
        <name>Zn(2+)</name>
        <dbReference type="ChEBI" id="CHEBI:29105"/>
    </ligand>
</feature>
<feature type="binding site" evidence="12 14 16 21 23 24">
    <location>
        <position position="1083"/>
    </location>
    <ligand>
        <name>Zn(2+)</name>
        <dbReference type="ChEBI" id="CHEBI:29105"/>
    </ligand>
</feature>
<feature type="binding site" evidence="12 13 14 16 21 22 23 24">
    <location>
        <position position="1092"/>
    </location>
    <ligand>
        <name>Zn(2+)</name>
        <dbReference type="ChEBI" id="CHEBI:29105"/>
    </ligand>
</feature>
<feature type="binding site" evidence="12 13 14 16 21 22 23 24">
    <location>
        <position position="1095"/>
    </location>
    <ligand>
        <name>Zn(2+)</name>
        <dbReference type="ChEBI" id="CHEBI:29105"/>
    </ligand>
</feature>
<feature type="site" description="Critical in trapping poly(dT) in Pol III-mediated transcription termination" evidence="19">
    <location>
        <position position="429"/>
    </location>
</feature>
<feature type="splice variant" id="VSP_045286" description="In isoform 2." evidence="17">
    <location>
        <begin position="1"/>
        <end position="58"/>
    </location>
</feature>
<feature type="sequence variant" id="VAR_072344" description="In HLD8; dbSNP:rs2136887072." evidence="9">
    <original>L</original>
    <variation>F</variation>
    <location>
        <position position="104"/>
    </location>
</feature>
<feature type="sequence variant" id="VAR_072345" description="In HLD8; dbSNP:rs2136917152." evidence="9">
    <original>S</original>
    <variation>G</variation>
    <location>
        <position position="268"/>
    </location>
</feature>
<feature type="sequence variant" id="VAR_086912" description="In CMT1I; affects RNA polymerase III assembly; no effect on nuclear localization; dbSNP:rs2136937347." evidence="11">
    <original>E</original>
    <variation>K</variation>
    <location>
        <position position="363"/>
    </location>
</feature>
<feature type="sequence variant" id="VAR_086913" description="In CMT1I; affects RNA polymerase III assembly; no effect on nuclear localization; dbSNP:rs2037218302." evidence="11">
    <original>A</original>
    <variation>V</variation>
    <location>
        <position position="365"/>
    </location>
</feature>
<feature type="sequence variant" id="VAR_086914" description="In CMT1I; affects RNA polymerase III assembly; no effect on nuclear localization; dbSNP:rs2037451945." evidence="11">
    <original>D</original>
    <variation>V</variation>
    <location>
        <position position="375"/>
    </location>
</feature>
<feature type="sequence variant" id="VAR_086915" description="In CMT1I; affects RNA polymerase III assembly; no effect on nuclear localization; dbSNP:rs2037490138." evidence="11">
    <original>L</original>
    <variation>S</variation>
    <location>
        <position position="426"/>
    </location>
</feature>
<feature type="sequence variant" id="VAR_072346" description="In HLD8; dbSNP:rs1442212683." evidence="9">
    <original>R</original>
    <variation>C</variation>
    <location>
        <position position="442"/>
    </location>
</feature>
<feature type="sequence variant" id="VAR_086916" description="In CMT1I; affects RNA polymerase III assembly; no effect on nuclear localization; dbSNP:rs2037492289." evidence="11">
    <original>T</original>
    <variation>R</variation>
    <location>
        <position position="462"/>
    </location>
</feature>
<feature type="sequence variant" id="VAR_067005" description="In HLD8; dbSNP:rs267608683." evidence="8">
    <original>T</original>
    <variation>K</variation>
    <location>
        <position position="503"/>
    </location>
</feature>
<feature type="sequence variant" id="VAR_067006" description="In HLD8; dbSNP:rs138249161." evidence="8 9">
    <original>V</original>
    <variation>E</variation>
    <location>
        <position position="523"/>
    </location>
</feature>
<feature type="sequence variant" id="VAR_072347" description="In HLD8; dbSNP:rs2137003969." evidence="9">
    <original>C</original>
    <variation>R</variation>
    <location>
        <position position="527"/>
    </location>
</feature>
<feature type="sequence variant" id="VAR_067007" description="In HLD8." evidence="7">
    <location>
        <begin position="620"/>
        <end position="652"/>
    </location>
</feature>
<feature type="sequence variant" id="VAR_057255" description="In dbSNP:rs17038460.">
    <original>T</original>
    <variation>A</variation>
    <location>
        <position position="740"/>
    </location>
</feature>
<feature type="sequence variant" id="VAR_067008" description="In HLD8; dbSNP:rs267608687." evidence="7">
    <original>R</original>
    <variation>H</variation>
    <location>
        <position position="768"/>
    </location>
</feature>
<feature type="sequence variant" id="VAR_067009" description="In HLD8; dbSNP:rs267608689." evidence="7">
    <original>D</original>
    <variation>E</variation>
    <location>
        <position position="926"/>
    </location>
</feature>
<feature type="sequence variant" id="VAR_086917" description="In CMT1I; affects RNA polymerase III assembly; no effect on nuclear localization; dbSNP:rs2038648611." evidence="11 15">
    <original>R</original>
    <variation>H</variation>
    <location>
        <position position="1046"/>
    </location>
</feature>
<feature type="sequence conflict" description="In Ref. 1; AAM18214." evidence="18" ref="1">
    <original>E</original>
    <variation>A</variation>
    <location>
        <position position="258"/>
    </location>
</feature>
<feature type="sequence conflict" description="In Ref. 2; BAG53685." evidence="18" ref="2">
    <original>T</original>
    <variation>I</variation>
    <location>
        <position position="607"/>
    </location>
</feature>
<feature type="sequence conflict" description="In Ref. 2; BAA91527." evidence="18" ref="2">
    <original>R</original>
    <variation>C</variation>
    <location>
        <position position="978"/>
    </location>
</feature>
<feature type="helix" evidence="25">
    <location>
        <begin position="26"/>
        <end position="28"/>
    </location>
</feature>
<feature type="helix" evidence="25">
    <location>
        <begin position="29"/>
        <end position="34"/>
    </location>
</feature>
<feature type="strand" evidence="26">
    <location>
        <begin position="37"/>
        <end position="40"/>
    </location>
</feature>
<feature type="helix" evidence="25">
    <location>
        <begin position="41"/>
        <end position="52"/>
    </location>
</feature>
<feature type="helix" evidence="25">
    <location>
        <begin position="54"/>
        <end position="60"/>
    </location>
</feature>
<feature type="strand" evidence="25">
    <location>
        <begin position="64"/>
        <end position="66"/>
    </location>
</feature>
<feature type="strand" evidence="25">
    <location>
        <begin position="68"/>
        <end position="70"/>
    </location>
</feature>
<feature type="strand" evidence="25">
    <location>
        <begin position="74"/>
        <end position="81"/>
    </location>
</feature>
<feature type="strand" evidence="25">
    <location>
        <begin position="86"/>
        <end position="88"/>
    </location>
</feature>
<feature type="strand" evidence="27">
    <location>
        <begin position="90"/>
        <end position="92"/>
    </location>
</feature>
<feature type="strand" evidence="25">
    <location>
        <begin position="94"/>
        <end position="96"/>
    </location>
</feature>
<feature type="helix" evidence="25">
    <location>
        <begin position="99"/>
        <end position="105"/>
    </location>
</feature>
<feature type="strand" evidence="25">
    <location>
        <begin position="110"/>
        <end position="119"/>
    </location>
</feature>
<feature type="strand" evidence="25">
    <location>
        <begin position="121"/>
        <end position="124"/>
    </location>
</feature>
<feature type="strand" evidence="25">
    <location>
        <begin position="126"/>
        <end position="137"/>
    </location>
</feature>
<feature type="strand" evidence="25">
    <location>
        <begin position="142"/>
        <end position="145"/>
    </location>
</feature>
<feature type="turn" evidence="25">
    <location>
        <begin position="146"/>
        <end position="149"/>
    </location>
</feature>
<feature type="helix" evidence="25">
    <location>
        <begin position="152"/>
        <end position="155"/>
    </location>
</feature>
<feature type="turn" evidence="25">
    <location>
        <begin position="156"/>
        <end position="159"/>
    </location>
</feature>
<feature type="strand" evidence="25">
    <location>
        <begin position="169"/>
        <end position="171"/>
    </location>
</feature>
<feature type="strand" evidence="25">
    <location>
        <begin position="174"/>
        <end position="178"/>
    </location>
</feature>
<feature type="strand" evidence="25">
    <location>
        <begin position="180"/>
        <end position="184"/>
    </location>
</feature>
<feature type="strand" evidence="25">
    <location>
        <begin position="190"/>
        <end position="193"/>
    </location>
</feature>
<feature type="strand" evidence="29">
    <location>
        <begin position="194"/>
        <end position="196"/>
    </location>
</feature>
<feature type="strand" evidence="25">
    <location>
        <begin position="199"/>
        <end position="204"/>
    </location>
</feature>
<feature type="strand" evidence="27">
    <location>
        <begin position="207"/>
        <end position="209"/>
    </location>
</feature>
<feature type="strand" evidence="25">
    <location>
        <begin position="213"/>
        <end position="217"/>
    </location>
</feature>
<feature type="strand" evidence="25">
    <location>
        <begin position="224"/>
        <end position="226"/>
    </location>
</feature>
<feature type="strand" evidence="25">
    <location>
        <begin position="230"/>
        <end position="232"/>
    </location>
</feature>
<feature type="helix" evidence="25">
    <location>
        <begin position="236"/>
        <end position="242"/>
    </location>
</feature>
<feature type="helix" evidence="25">
    <location>
        <begin position="248"/>
        <end position="255"/>
    </location>
</feature>
<feature type="helix" evidence="25">
    <location>
        <begin position="259"/>
        <end position="272"/>
    </location>
</feature>
<feature type="turn" evidence="25">
    <location>
        <begin position="273"/>
        <end position="276"/>
    </location>
</feature>
<feature type="helix" evidence="25">
    <location>
        <begin position="280"/>
        <end position="288"/>
    </location>
</feature>
<feature type="helix" evidence="25">
    <location>
        <begin position="307"/>
        <end position="315"/>
    </location>
</feature>
<feature type="turn" evidence="25">
    <location>
        <begin position="316"/>
        <end position="320"/>
    </location>
</feature>
<feature type="strand" evidence="25">
    <location>
        <begin position="324"/>
        <end position="326"/>
    </location>
</feature>
<feature type="helix" evidence="25">
    <location>
        <begin position="329"/>
        <end position="346"/>
    </location>
</feature>
<feature type="turn" evidence="25">
    <location>
        <begin position="357"/>
        <end position="359"/>
    </location>
</feature>
<feature type="strand" evidence="25">
    <location>
        <begin position="360"/>
        <end position="363"/>
    </location>
</feature>
<feature type="helix" evidence="25">
    <location>
        <begin position="365"/>
        <end position="391"/>
    </location>
</feature>
<feature type="turn" evidence="25">
    <location>
        <begin position="392"/>
        <end position="394"/>
    </location>
</feature>
<feature type="strand" evidence="27">
    <location>
        <begin position="396"/>
        <end position="398"/>
    </location>
</feature>
<feature type="helix" evidence="25">
    <location>
        <begin position="402"/>
        <end position="405"/>
    </location>
</feature>
<feature type="helix" evidence="25">
    <location>
        <begin position="409"/>
        <end position="421"/>
    </location>
</feature>
<feature type="strand" evidence="25">
    <location>
        <begin position="424"/>
        <end position="426"/>
    </location>
</feature>
<feature type="helix" evidence="25">
    <location>
        <begin position="427"/>
        <end position="429"/>
    </location>
</feature>
<feature type="strand" evidence="25">
    <location>
        <begin position="431"/>
        <end position="433"/>
    </location>
</feature>
<feature type="strand" evidence="25">
    <location>
        <begin position="437"/>
        <end position="439"/>
    </location>
</feature>
<feature type="helix" evidence="25">
    <location>
        <begin position="445"/>
        <end position="451"/>
    </location>
</feature>
<feature type="strand" evidence="25">
    <location>
        <begin position="454"/>
        <end position="456"/>
    </location>
</feature>
<feature type="strand" evidence="25">
    <location>
        <begin position="461"/>
        <end position="463"/>
    </location>
</feature>
<feature type="strand" evidence="25">
    <location>
        <begin position="467"/>
        <end position="470"/>
    </location>
</feature>
<feature type="helix" evidence="25">
    <location>
        <begin position="473"/>
        <end position="475"/>
    </location>
</feature>
<feature type="turn" evidence="25">
    <location>
        <begin position="476"/>
        <end position="478"/>
    </location>
</feature>
<feature type="turn" evidence="25">
    <location>
        <begin position="488"/>
        <end position="492"/>
    </location>
</feature>
<feature type="strand" evidence="25">
    <location>
        <begin position="493"/>
        <end position="496"/>
    </location>
</feature>
<feature type="helix" evidence="25">
    <location>
        <begin position="509"/>
        <end position="515"/>
    </location>
</feature>
<feature type="turn" evidence="25">
    <location>
        <begin position="516"/>
        <end position="519"/>
    </location>
</feature>
<feature type="helix" evidence="25">
    <location>
        <begin position="523"/>
        <end position="525"/>
    </location>
</feature>
<feature type="helix" evidence="25">
    <location>
        <begin position="529"/>
        <end position="532"/>
    </location>
</feature>
<feature type="strand" evidence="28">
    <location>
        <begin position="533"/>
        <end position="535"/>
    </location>
</feature>
<feature type="strand" evidence="25">
    <location>
        <begin position="537"/>
        <end position="541"/>
    </location>
</feature>
<feature type="strand" evidence="25">
    <location>
        <begin position="544"/>
        <end position="550"/>
    </location>
</feature>
<feature type="helix" evidence="25">
    <location>
        <begin position="552"/>
        <end position="564"/>
    </location>
</feature>
<feature type="strand" evidence="27">
    <location>
        <begin position="566"/>
        <end position="568"/>
    </location>
</feature>
<feature type="strand" evidence="25">
    <location>
        <begin position="573"/>
        <end position="577"/>
    </location>
</feature>
<feature type="turn" evidence="25">
    <location>
        <begin position="578"/>
        <end position="581"/>
    </location>
</feature>
<feature type="strand" evidence="25">
    <location>
        <begin position="582"/>
        <end position="586"/>
    </location>
</feature>
<feature type="strand" evidence="25">
    <location>
        <begin position="592"/>
        <end position="600"/>
    </location>
</feature>
<feature type="strand" evidence="25">
    <location>
        <begin position="603"/>
        <end position="605"/>
    </location>
</feature>
<feature type="helix" evidence="25">
    <location>
        <begin position="608"/>
        <end position="615"/>
    </location>
</feature>
<feature type="helix" evidence="25">
    <location>
        <begin position="621"/>
        <end position="626"/>
    </location>
</feature>
<feature type="strand" evidence="25">
    <location>
        <begin position="629"/>
        <end position="634"/>
    </location>
</feature>
<feature type="turn" evidence="25">
    <location>
        <begin position="635"/>
        <end position="640"/>
    </location>
</feature>
<feature type="strand" evidence="25">
    <location>
        <begin position="643"/>
        <end position="646"/>
    </location>
</feature>
<feature type="helix" evidence="25">
    <location>
        <begin position="647"/>
        <end position="649"/>
    </location>
</feature>
<feature type="helix" evidence="25">
    <location>
        <begin position="661"/>
        <end position="664"/>
    </location>
</feature>
<feature type="helix" evidence="25">
    <location>
        <begin position="669"/>
        <end position="671"/>
    </location>
</feature>
<feature type="strand" evidence="25">
    <location>
        <begin position="672"/>
        <end position="674"/>
    </location>
</feature>
<feature type="helix" evidence="25">
    <location>
        <begin position="675"/>
        <end position="677"/>
    </location>
</feature>
<feature type="helix" evidence="25">
    <location>
        <begin position="680"/>
        <end position="692"/>
    </location>
</feature>
<feature type="turn" evidence="25">
    <location>
        <begin position="699"/>
        <end position="702"/>
    </location>
</feature>
<feature type="strand" evidence="25">
    <location>
        <begin position="707"/>
        <end position="714"/>
    </location>
</feature>
<feature type="strand" evidence="25">
    <location>
        <begin position="719"/>
        <end position="721"/>
    </location>
</feature>
<feature type="helix" evidence="25">
    <location>
        <begin position="723"/>
        <end position="727"/>
    </location>
</feature>
<feature type="helix" evidence="25">
    <location>
        <begin position="730"/>
        <end position="732"/>
    </location>
</feature>
<feature type="strand" evidence="25">
    <location>
        <begin position="737"/>
        <end position="744"/>
    </location>
</feature>
<feature type="strand" evidence="25">
    <location>
        <begin position="751"/>
        <end position="753"/>
    </location>
</feature>
<feature type="strand" evidence="25">
    <location>
        <begin position="755"/>
        <end position="758"/>
    </location>
</feature>
<feature type="helix" evidence="25">
    <location>
        <begin position="759"/>
        <end position="764"/>
    </location>
</feature>
<feature type="turn" evidence="25">
    <location>
        <begin position="765"/>
        <end position="767"/>
    </location>
</feature>
<feature type="strand" evidence="25">
    <location>
        <begin position="769"/>
        <end position="779"/>
    </location>
</feature>
<feature type="strand" evidence="25">
    <location>
        <begin position="783"/>
        <end position="785"/>
    </location>
</feature>
<feature type="turn" evidence="25">
    <location>
        <begin position="797"/>
        <end position="799"/>
    </location>
</feature>
<feature type="strand" evidence="25">
    <location>
        <begin position="800"/>
        <end position="802"/>
    </location>
</feature>
<feature type="helix" evidence="25">
    <location>
        <begin position="804"/>
        <end position="806"/>
    </location>
</feature>
<feature type="strand" evidence="28">
    <location>
        <begin position="807"/>
        <end position="809"/>
    </location>
</feature>
<feature type="strand" evidence="25">
    <location>
        <begin position="813"/>
        <end position="815"/>
    </location>
</feature>
<feature type="strand" evidence="30">
    <location>
        <begin position="819"/>
        <end position="821"/>
    </location>
</feature>
<feature type="strand" evidence="25">
    <location>
        <begin position="825"/>
        <end position="828"/>
    </location>
</feature>
<feature type="strand" evidence="25">
    <location>
        <begin position="830"/>
        <end position="833"/>
    </location>
</feature>
<feature type="strand" evidence="25">
    <location>
        <begin position="851"/>
        <end position="853"/>
    </location>
</feature>
<feature type="strand" evidence="25">
    <location>
        <begin position="856"/>
        <end position="858"/>
    </location>
</feature>
<feature type="strand" evidence="25">
    <location>
        <begin position="864"/>
        <end position="873"/>
    </location>
</feature>
<feature type="strand" evidence="25">
    <location>
        <begin position="879"/>
        <end position="889"/>
    </location>
</feature>
<feature type="strand" evidence="25">
    <location>
        <begin position="896"/>
        <end position="898"/>
    </location>
</feature>
<feature type="strand" evidence="25">
    <location>
        <begin position="900"/>
        <end position="902"/>
    </location>
</feature>
<feature type="strand" evidence="25">
    <location>
        <begin position="905"/>
        <end position="911"/>
    </location>
</feature>
<feature type="helix" evidence="25">
    <location>
        <begin position="913"/>
        <end position="915"/>
    </location>
</feature>
<feature type="strand" evidence="26">
    <location>
        <begin position="920"/>
        <end position="922"/>
    </location>
</feature>
<feature type="strand" evidence="25">
    <location>
        <begin position="926"/>
        <end position="929"/>
    </location>
</feature>
<feature type="helix" evidence="25">
    <location>
        <begin position="933"/>
        <end position="937"/>
    </location>
</feature>
<feature type="helix" evidence="25">
    <location>
        <begin position="940"/>
        <end position="953"/>
    </location>
</feature>
<feature type="turn" evidence="25">
    <location>
        <begin position="954"/>
        <end position="956"/>
    </location>
</feature>
<feature type="helix" evidence="25">
    <location>
        <begin position="969"/>
        <end position="978"/>
    </location>
</feature>
<feature type="strand" evidence="27">
    <location>
        <begin position="983"/>
        <end position="987"/>
    </location>
</feature>
<feature type="turn" evidence="25">
    <location>
        <begin position="992"/>
        <end position="994"/>
    </location>
</feature>
<feature type="strand" evidence="25">
    <location>
        <begin position="995"/>
        <end position="997"/>
    </location>
</feature>
<feature type="strand" evidence="25">
    <location>
        <begin position="1002"/>
        <end position="1013"/>
    </location>
</feature>
<feature type="helix" evidence="25">
    <location>
        <begin position="1016"/>
        <end position="1018"/>
    </location>
</feature>
<feature type="strand" evidence="25">
    <location>
        <begin position="1021"/>
        <end position="1025"/>
    </location>
</feature>
<feature type="strand" evidence="25">
    <location>
        <begin position="1030"/>
        <end position="1032"/>
    </location>
</feature>
<feature type="turn" evidence="25">
    <location>
        <begin position="1039"/>
        <end position="1042"/>
    </location>
</feature>
<feature type="strand" evidence="25">
    <location>
        <begin position="1045"/>
        <end position="1047"/>
    </location>
</feature>
<feature type="helix" evidence="25">
    <location>
        <begin position="1049"/>
        <end position="1057"/>
    </location>
</feature>
<feature type="helix" evidence="25">
    <location>
        <begin position="1061"/>
        <end position="1068"/>
    </location>
</feature>
<feature type="turn" evidence="25">
    <location>
        <begin position="1069"/>
        <end position="1072"/>
    </location>
</feature>
<feature type="strand" evidence="25">
    <location>
        <begin position="1074"/>
        <end position="1080"/>
    </location>
</feature>
<feature type="turn" evidence="25">
    <location>
        <begin position="1081"/>
        <end position="1083"/>
    </location>
</feature>
<feature type="strand" evidence="25">
    <location>
        <begin position="1086"/>
        <end position="1088"/>
    </location>
</feature>
<feature type="turn" evidence="25">
    <location>
        <begin position="1093"/>
        <end position="1096"/>
    </location>
</feature>
<feature type="strand" evidence="25">
    <location>
        <begin position="1097"/>
        <end position="1107"/>
    </location>
</feature>
<feature type="helix" evidence="25">
    <location>
        <begin position="1108"/>
        <end position="1119"/>
    </location>
</feature>
<feature type="strand" evidence="25">
    <location>
        <begin position="1123"/>
        <end position="1130"/>
    </location>
</feature>
<protein>
    <recommendedName>
        <fullName>DNA-directed RNA polymerase III subunit RPC2</fullName>
        <shortName>RNA polymerase III subunit C2</shortName>
        <ecNumber evidence="4 10 12 16">2.7.7.6</ecNumber>
    </recommendedName>
    <alternativeName>
        <fullName>C128</fullName>
    </alternativeName>
    <alternativeName>
        <fullName>DNA-directed RNA polymerase III 127.6 kDa polypeptide</fullName>
    </alternativeName>
    <alternativeName>
        <fullName>DNA-directed RNA polymerase III subunit B</fullName>
    </alternativeName>
</protein>
<reference key="1">
    <citation type="journal article" date="2002" name="Mol. Cell. Biol.">
        <title>Characterization of human RNA polymerase III identifies orthologues for Saccharomyces cerevisiae RNA polymerase III subunits.</title>
        <authorList>
            <person name="Hu P."/>
            <person name="Wu S."/>
            <person name="Sun Y."/>
            <person name="Yuan C.-C."/>
            <person name="Kobayashi R."/>
            <person name="Myers M.P."/>
            <person name="Hernandez N."/>
        </authorList>
    </citation>
    <scope>NUCLEOTIDE SEQUENCE [MRNA] (ISOFORM 1)</scope>
    <scope>IDENTIFICATION IN THE RNA POL III COMPLEX</scope>
    <scope>IDENTIFICATION BY MASS SPECTROMETRY</scope>
</reference>
<reference key="2">
    <citation type="journal article" date="2004" name="Nat. Genet.">
        <title>Complete sequencing and characterization of 21,243 full-length human cDNAs.</title>
        <authorList>
            <person name="Ota T."/>
            <person name="Suzuki Y."/>
            <person name="Nishikawa T."/>
            <person name="Otsuki T."/>
            <person name="Sugiyama T."/>
            <person name="Irie R."/>
            <person name="Wakamatsu A."/>
            <person name="Hayashi K."/>
            <person name="Sato H."/>
            <person name="Nagai K."/>
            <person name="Kimura K."/>
            <person name="Makita H."/>
            <person name="Sekine M."/>
            <person name="Obayashi M."/>
            <person name="Nishi T."/>
            <person name="Shibahara T."/>
            <person name="Tanaka T."/>
            <person name="Ishii S."/>
            <person name="Yamamoto J."/>
            <person name="Saito K."/>
            <person name="Kawai Y."/>
            <person name="Isono Y."/>
            <person name="Nakamura Y."/>
            <person name="Nagahari K."/>
            <person name="Murakami K."/>
            <person name="Yasuda T."/>
            <person name="Iwayanagi T."/>
            <person name="Wagatsuma M."/>
            <person name="Shiratori A."/>
            <person name="Sudo H."/>
            <person name="Hosoiri T."/>
            <person name="Kaku Y."/>
            <person name="Kodaira H."/>
            <person name="Kondo H."/>
            <person name="Sugawara M."/>
            <person name="Takahashi M."/>
            <person name="Kanda K."/>
            <person name="Yokoi T."/>
            <person name="Furuya T."/>
            <person name="Kikkawa E."/>
            <person name="Omura Y."/>
            <person name="Abe K."/>
            <person name="Kamihara K."/>
            <person name="Katsuta N."/>
            <person name="Sato K."/>
            <person name="Tanikawa M."/>
            <person name="Yamazaki M."/>
            <person name="Ninomiya K."/>
            <person name="Ishibashi T."/>
            <person name="Yamashita H."/>
            <person name="Murakawa K."/>
            <person name="Fujimori K."/>
            <person name="Tanai H."/>
            <person name="Kimata M."/>
            <person name="Watanabe M."/>
            <person name="Hiraoka S."/>
            <person name="Chiba Y."/>
            <person name="Ishida S."/>
            <person name="Ono Y."/>
            <person name="Takiguchi S."/>
            <person name="Watanabe S."/>
            <person name="Yosida M."/>
            <person name="Hotuta T."/>
            <person name="Kusano J."/>
            <person name="Kanehori K."/>
            <person name="Takahashi-Fujii A."/>
            <person name="Hara H."/>
            <person name="Tanase T.-O."/>
            <person name="Nomura Y."/>
            <person name="Togiya S."/>
            <person name="Komai F."/>
            <person name="Hara R."/>
            <person name="Takeuchi K."/>
            <person name="Arita M."/>
            <person name="Imose N."/>
            <person name="Musashino K."/>
            <person name="Yuuki H."/>
            <person name="Oshima A."/>
            <person name="Sasaki N."/>
            <person name="Aotsuka S."/>
            <person name="Yoshikawa Y."/>
            <person name="Matsunawa H."/>
            <person name="Ichihara T."/>
            <person name="Shiohata N."/>
            <person name="Sano S."/>
            <person name="Moriya S."/>
            <person name="Momiyama H."/>
            <person name="Satoh N."/>
            <person name="Takami S."/>
            <person name="Terashima Y."/>
            <person name="Suzuki O."/>
            <person name="Nakagawa S."/>
            <person name="Senoh A."/>
            <person name="Mizoguchi H."/>
            <person name="Goto Y."/>
            <person name="Shimizu F."/>
            <person name="Wakebe H."/>
            <person name="Hishigaki H."/>
            <person name="Watanabe T."/>
            <person name="Sugiyama A."/>
            <person name="Takemoto M."/>
            <person name="Kawakami B."/>
            <person name="Yamazaki M."/>
            <person name="Watanabe K."/>
            <person name="Kumagai A."/>
            <person name="Itakura S."/>
            <person name="Fukuzumi Y."/>
            <person name="Fujimori Y."/>
            <person name="Komiyama M."/>
            <person name="Tashiro H."/>
            <person name="Tanigami A."/>
            <person name="Fujiwara T."/>
            <person name="Ono T."/>
            <person name="Yamada K."/>
            <person name="Fujii Y."/>
            <person name="Ozaki K."/>
            <person name="Hirao M."/>
            <person name="Ohmori Y."/>
            <person name="Kawabata A."/>
            <person name="Hikiji T."/>
            <person name="Kobatake N."/>
            <person name="Inagaki H."/>
            <person name="Ikema Y."/>
            <person name="Okamoto S."/>
            <person name="Okitani R."/>
            <person name="Kawakami T."/>
            <person name="Noguchi S."/>
            <person name="Itoh T."/>
            <person name="Shigeta K."/>
            <person name="Senba T."/>
            <person name="Matsumura K."/>
            <person name="Nakajima Y."/>
            <person name="Mizuno T."/>
            <person name="Morinaga M."/>
            <person name="Sasaki M."/>
            <person name="Togashi T."/>
            <person name="Oyama M."/>
            <person name="Hata H."/>
            <person name="Watanabe M."/>
            <person name="Komatsu T."/>
            <person name="Mizushima-Sugano J."/>
            <person name="Satoh T."/>
            <person name="Shirai Y."/>
            <person name="Takahashi Y."/>
            <person name="Nakagawa K."/>
            <person name="Okumura K."/>
            <person name="Nagase T."/>
            <person name="Nomura N."/>
            <person name="Kikuchi H."/>
            <person name="Masuho Y."/>
            <person name="Yamashita R."/>
            <person name="Nakai K."/>
            <person name="Yada T."/>
            <person name="Nakamura Y."/>
            <person name="Ohara O."/>
            <person name="Isogai T."/>
            <person name="Sugano S."/>
        </authorList>
    </citation>
    <scope>NUCLEOTIDE SEQUENCE [LARGE SCALE MRNA] (ISOFORMS 1 AND 2)</scope>
    <source>
        <tissue>Placenta</tissue>
        <tissue>Teratocarcinoma</tissue>
        <tissue>Tongue</tissue>
    </source>
</reference>
<reference key="3">
    <citation type="journal article" date="2006" name="Nature">
        <title>The finished DNA sequence of human chromosome 12.</title>
        <authorList>
            <person name="Scherer S.E."/>
            <person name="Muzny D.M."/>
            <person name="Buhay C.J."/>
            <person name="Chen R."/>
            <person name="Cree A."/>
            <person name="Ding Y."/>
            <person name="Dugan-Rocha S."/>
            <person name="Gill R."/>
            <person name="Gunaratne P."/>
            <person name="Harris R.A."/>
            <person name="Hawes A.C."/>
            <person name="Hernandez J."/>
            <person name="Hodgson A.V."/>
            <person name="Hume J."/>
            <person name="Jackson A."/>
            <person name="Khan Z.M."/>
            <person name="Kovar-Smith C."/>
            <person name="Lewis L.R."/>
            <person name="Lozado R.J."/>
            <person name="Metzker M.L."/>
            <person name="Milosavljevic A."/>
            <person name="Miner G.R."/>
            <person name="Montgomery K.T."/>
            <person name="Morgan M.B."/>
            <person name="Nazareth L.V."/>
            <person name="Scott G."/>
            <person name="Sodergren E."/>
            <person name="Song X.-Z."/>
            <person name="Steffen D."/>
            <person name="Lovering R.C."/>
            <person name="Wheeler D.A."/>
            <person name="Worley K.C."/>
            <person name="Yuan Y."/>
            <person name="Zhang Z."/>
            <person name="Adams C.Q."/>
            <person name="Ansari-Lari M.A."/>
            <person name="Ayele M."/>
            <person name="Brown M.J."/>
            <person name="Chen G."/>
            <person name="Chen Z."/>
            <person name="Clerc-Blankenburg K.P."/>
            <person name="Davis C."/>
            <person name="Delgado O."/>
            <person name="Dinh H.H."/>
            <person name="Draper H."/>
            <person name="Gonzalez-Garay M.L."/>
            <person name="Havlak P."/>
            <person name="Jackson L.R."/>
            <person name="Jacob L.S."/>
            <person name="Kelly S.H."/>
            <person name="Li L."/>
            <person name="Li Z."/>
            <person name="Liu J."/>
            <person name="Liu W."/>
            <person name="Lu J."/>
            <person name="Maheshwari M."/>
            <person name="Nguyen B.-V."/>
            <person name="Okwuonu G.O."/>
            <person name="Pasternak S."/>
            <person name="Perez L.M."/>
            <person name="Plopper F.J.H."/>
            <person name="Santibanez J."/>
            <person name="Shen H."/>
            <person name="Tabor P.E."/>
            <person name="Verduzco D."/>
            <person name="Waldron L."/>
            <person name="Wang Q."/>
            <person name="Williams G.A."/>
            <person name="Zhang J."/>
            <person name="Zhou J."/>
            <person name="Allen C.C."/>
            <person name="Amin A.G."/>
            <person name="Anyalebechi V."/>
            <person name="Bailey M."/>
            <person name="Barbaria J.A."/>
            <person name="Bimage K.E."/>
            <person name="Bryant N.P."/>
            <person name="Burch P.E."/>
            <person name="Burkett C.E."/>
            <person name="Burrell K.L."/>
            <person name="Calderon E."/>
            <person name="Cardenas V."/>
            <person name="Carter K."/>
            <person name="Casias K."/>
            <person name="Cavazos I."/>
            <person name="Cavazos S.R."/>
            <person name="Ceasar H."/>
            <person name="Chacko J."/>
            <person name="Chan S.N."/>
            <person name="Chavez D."/>
            <person name="Christopoulos C."/>
            <person name="Chu J."/>
            <person name="Cockrell R."/>
            <person name="Cox C.D."/>
            <person name="Dang M."/>
            <person name="Dathorne S.R."/>
            <person name="David R."/>
            <person name="Davis C.M."/>
            <person name="Davy-Carroll L."/>
            <person name="Deshazo D.R."/>
            <person name="Donlin J.E."/>
            <person name="D'Souza L."/>
            <person name="Eaves K.A."/>
            <person name="Egan A."/>
            <person name="Emery-Cohen A.J."/>
            <person name="Escotto M."/>
            <person name="Flagg N."/>
            <person name="Forbes L.D."/>
            <person name="Gabisi A.M."/>
            <person name="Garza M."/>
            <person name="Hamilton C."/>
            <person name="Henderson N."/>
            <person name="Hernandez O."/>
            <person name="Hines S."/>
            <person name="Hogues M.E."/>
            <person name="Huang M."/>
            <person name="Idlebird D.G."/>
            <person name="Johnson R."/>
            <person name="Jolivet A."/>
            <person name="Jones S."/>
            <person name="Kagan R."/>
            <person name="King L.M."/>
            <person name="Leal B."/>
            <person name="Lebow H."/>
            <person name="Lee S."/>
            <person name="LeVan J.M."/>
            <person name="Lewis L.C."/>
            <person name="London P."/>
            <person name="Lorensuhewa L.M."/>
            <person name="Loulseged H."/>
            <person name="Lovett D.A."/>
            <person name="Lucier A."/>
            <person name="Lucier R.L."/>
            <person name="Ma J."/>
            <person name="Madu R.C."/>
            <person name="Mapua P."/>
            <person name="Martindale A.D."/>
            <person name="Martinez E."/>
            <person name="Massey E."/>
            <person name="Mawhiney S."/>
            <person name="Meador M.G."/>
            <person name="Mendez S."/>
            <person name="Mercado C."/>
            <person name="Mercado I.C."/>
            <person name="Merritt C.E."/>
            <person name="Miner Z.L."/>
            <person name="Minja E."/>
            <person name="Mitchell T."/>
            <person name="Mohabbat F."/>
            <person name="Mohabbat K."/>
            <person name="Montgomery B."/>
            <person name="Moore N."/>
            <person name="Morris S."/>
            <person name="Munidasa M."/>
            <person name="Ngo R.N."/>
            <person name="Nguyen N.B."/>
            <person name="Nickerson E."/>
            <person name="Nwaokelemeh O.O."/>
            <person name="Nwokenkwo S."/>
            <person name="Obregon M."/>
            <person name="Oguh M."/>
            <person name="Oragunye N."/>
            <person name="Oviedo R.J."/>
            <person name="Parish B.J."/>
            <person name="Parker D.N."/>
            <person name="Parrish J."/>
            <person name="Parks K.L."/>
            <person name="Paul H.A."/>
            <person name="Payton B.A."/>
            <person name="Perez A."/>
            <person name="Perrin W."/>
            <person name="Pickens A."/>
            <person name="Primus E.L."/>
            <person name="Pu L.-L."/>
            <person name="Puazo M."/>
            <person name="Quiles M.M."/>
            <person name="Quiroz J.B."/>
            <person name="Rabata D."/>
            <person name="Reeves K."/>
            <person name="Ruiz S.J."/>
            <person name="Shao H."/>
            <person name="Sisson I."/>
            <person name="Sonaike T."/>
            <person name="Sorelle R.P."/>
            <person name="Sutton A.E."/>
            <person name="Svatek A.F."/>
            <person name="Svetz L.A."/>
            <person name="Tamerisa K.S."/>
            <person name="Taylor T.R."/>
            <person name="Teague B."/>
            <person name="Thomas N."/>
            <person name="Thorn R.D."/>
            <person name="Trejos Z.Y."/>
            <person name="Trevino B.K."/>
            <person name="Ukegbu O.N."/>
            <person name="Urban J.B."/>
            <person name="Vasquez L.I."/>
            <person name="Vera V.A."/>
            <person name="Villasana D.M."/>
            <person name="Wang L."/>
            <person name="Ward-Moore S."/>
            <person name="Warren J.T."/>
            <person name="Wei X."/>
            <person name="White F."/>
            <person name="Williamson A.L."/>
            <person name="Wleczyk R."/>
            <person name="Wooden H.S."/>
            <person name="Wooden S.H."/>
            <person name="Yen J."/>
            <person name="Yoon L."/>
            <person name="Yoon V."/>
            <person name="Zorrilla S.E."/>
            <person name="Nelson D."/>
            <person name="Kucherlapati R."/>
            <person name="Weinstock G."/>
            <person name="Gibbs R.A."/>
        </authorList>
    </citation>
    <scope>NUCLEOTIDE SEQUENCE [LARGE SCALE GENOMIC DNA]</scope>
</reference>
<reference key="4">
    <citation type="submission" date="2005-07" db="EMBL/GenBank/DDBJ databases">
        <authorList>
            <person name="Mural R.J."/>
            <person name="Istrail S."/>
            <person name="Sutton G.G."/>
            <person name="Florea L."/>
            <person name="Halpern A.L."/>
            <person name="Mobarry C.M."/>
            <person name="Lippert R."/>
            <person name="Walenz B."/>
            <person name="Shatkay H."/>
            <person name="Dew I."/>
            <person name="Miller J.R."/>
            <person name="Flanigan M.J."/>
            <person name="Edwards N.J."/>
            <person name="Bolanos R."/>
            <person name="Fasulo D."/>
            <person name="Halldorsson B.V."/>
            <person name="Hannenhalli S."/>
            <person name="Turner R."/>
            <person name="Yooseph S."/>
            <person name="Lu F."/>
            <person name="Nusskern D.R."/>
            <person name="Shue B.C."/>
            <person name="Zheng X.H."/>
            <person name="Zhong F."/>
            <person name="Delcher A.L."/>
            <person name="Huson D.H."/>
            <person name="Kravitz S.A."/>
            <person name="Mouchard L."/>
            <person name="Reinert K."/>
            <person name="Remington K.A."/>
            <person name="Clark A.G."/>
            <person name="Waterman M.S."/>
            <person name="Eichler E.E."/>
            <person name="Adams M.D."/>
            <person name="Hunkapiller M.W."/>
            <person name="Myers E.W."/>
            <person name="Venter J.C."/>
        </authorList>
    </citation>
    <scope>NUCLEOTIDE SEQUENCE [LARGE SCALE GENOMIC DNA]</scope>
</reference>
<reference key="5">
    <citation type="journal article" date="2004" name="Genome Res.">
        <title>The status, quality, and expansion of the NIH full-length cDNA project: the Mammalian Gene Collection (MGC).</title>
        <authorList>
            <consortium name="The MGC Project Team"/>
        </authorList>
    </citation>
    <scope>NUCLEOTIDE SEQUENCE [LARGE SCALE MRNA] (ISOFORM 1)</scope>
    <source>
        <tissue>Muscle</tissue>
    </source>
</reference>
<reference key="6">
    <citation type="journal article" date="2009" name="Cell">
        <title>RNA polymerase III detects cytosolic DNA and induces type I interferons through the RIG-I pathway.</title>
        <authorList>
            <person name="Chiu Y.-H."/>
            <person name="Macmillan J.B."/>
            <person name="Chen Z.J."/>
        </authorList>
    </citation>
    <scope>FUNCTION</scope>
    <scope>SUBUNIT</scope>
</reference>
<reference key="7">
    <citation type="journal article" date="2009" name="Nat. Immunol.">
        <title>RIG-I-dependent sensing of poly(dA:dT) through the induction of an RNA polymerase III-transcribed RNA intermediate.</title>
        <authorList>
            <person name="Ablasser A."/>
            <person name="Bauernfeind F."/>
            <person name="Hartmann G."/>
            <person name="Latz E."/>
            <person name="Fitzgerald K.A."/>
            <person name="Hornung V."/>
        </authorList>
    </citation>
    <scope>FUNCTION</scope>
    <scope>CATALYTIC ACTIVITY</scope>
</reference>
<reference key="8">
    <citation type="journal article" date="2010" name="Genome Res.">
        <title>Defining the RNA polymerase III transcriptome: Genome-wide localization of the RNA polymerase III transcription machinery in human cells.</title>
        <authorList>
            <person name="Canella D."/>
            <person name="Praz V."/>
            <person name="Reina J.H."/>
            <person name="Cousin P."/>
            <person name="Hernandez N."/>
        </authorList>
    </citation>
    <scope>FUNCTION OF POL III</scope>
</reference>
<reference key="9">
    <citation type="journal article" date="2011" name="BMC Syst. Biol.">
        <title>Initial characterization of the human central proteome.</title>
        <authorList>
            <person name="Burkard T.R."/>
            <person name="Planyavsky M."/>
            <person name="Kaupe I."/>
            <person name="Breitwieser F.P."/>
            <person name="Buerckstuemmer T."/>
            <person name="Bennett K.L."/>
            <person name="Superti-Furga G."/>
            <person name="Colinge J."/>
        </authorList>
    </citation>
    <scope>IDENTIFICATION BY MASS SPECTROMETRY [LARGE SCALE ANALYSIS]</scope>
</reference>
<reference key="10">
    <citation type="journal article" date="2014" name="Mol. Cell. Proteomics">
        <title>Immunoaffinity enrichment and mass spectrometry analysis of protein methylation.</title>
        <authorList>
            <person name="Guo A."/>
            <person name="Gu H."/>
            <person name="Zhou J."/>
            <person name="Mulhern D."/>
            <person name="Wang Y."/>
            <person name="Lee K.A."/>
            <person name="Yang V."/>
            <person name="Aguiar M."/>
            <person name="Kornhauser J."/>
            <person name="Jia X."/>
            <person name="Ren J."/>
            <person name="Beausoleil S.A."/>
            <person name="Silva J.C."/>
            <person name="Vemulapalli V."/>
            <person name="Bedford M.T."/>
            <person name="Comb M.J."/>
        </authorList>
    </citation>
    <scope>IDENTIFICATION BY MASS SPECTROMETRY [LARGE SCALE ANALYSIS]</scope>
    <source>
        <tissue>Colon carcinoma</tissue>
    </source>
</reference>
<reference key="11">
    <citation type="journal article" date="2022" name="Nat. Commun.">
        <title>A cancer-associated RNA polymerase III identity drives robust transcription and expression of snaR-A non-coding RNA.</title>
        <authorList>
            <person name="Van Bortle K."/>
            <person name="Marciano D.P."/>
            <person name="Liu Q."/>
            <person name="Chou T."/>
            <person name="Lipchik A.M."/>
            <person name="Gollapudi S."/>
            <person name="Geller B.S."/>
            <person name="Monte E."/>
            <person name="Kamakaka R.T."/>
            <person name="Snyder M.P."/>
        </authorList>
    </citation>
    <scope>FUNCTION OF POL III</scope>
    <scope>SUBUNIT</scope>
</reference>
<reference key="12">
    <citation type="journal article" date="2020" name="Nat. Commun.">
        <title>Structure of human RNA polymerase III.</title>
        <authorList>
            <person name="Ramsay E.P."/>
            <person name="Abascal-Palacios G."/>
            <person name="Daiss J.L."/>
            <person name="King H."/>
            <person name="Gouge J."/>
            <person name="Pilsl M."/>
            <person name="Beuron F."/>
            <person name="Morris E."/>
            <person name="Gunkel P."/>
            <person name="Engel C."/>
            <person name="Vannini A."/>
        </authorList>
    </citation>
    <scope>STRUCTURE BY ELECTRON MICROSCOPY (4.00 ANGSTROMS)</scope>
    <scope>SUBCELLULAR LOCATION</scope>
    <scope>SUBUNIT</scope>
</reference>
<reference key="13">
    <citation type="journal article" date="2021" name="Cell Res.">
        <title>Structure of human RNA polymerase III elongation complex.</title>
        <authorList>
            <person name="Li L."/>
            <person name="Yu Z."/>
            <person name="Zhao D."/>
            <person name="Ren Y."/>
            <person name="Hou H."/>
            <person name="Xu Y."/>
        </authorList>
    </citation>
    <scope>STRUCTURE BY ELECTRON MICROSCOPY (3.35 ANGSTROMS) IN COMPLEX WITH DNA-RNA HYBRID AND ZN(2+)</scope>
    <scope>FUNCTION</scope>
    <scope>SUBUNIT</scope>
</reference>
<reference key="14">
    <citation type="journal article" date="2021" name="Nat. Commun.">
        <title>Structural insights into RNA polymerase III-mediated transcription termination through trapping poly-deoxythymidine.</title>
        <authorList>
            <person name="Hou H."/>
            <person name="Li Y."/>
            <person name="Wang M."/>
            <person name="Liu A."/>
            <person name="Yu Z."/>
            <person name="Chen K."/>
            <person name="Zhao D."/>
            <person name="Xu Y."/>
        </authorList>
    </citation>
    <scope>STRUCTURE BY ELECTRON MICROSCOPY (3.60 ANGSTROMS) IN COMPLEX WITH DNA-RNA HYBRID AND ZN(2+)</scope>
    <scope>FUNCTION</scope>
    <scope>CATALYTIC ACTIVITY</scope>
    <scope>SUBUNIT</scope>
    <scope>SITE</scope>
</reference>
<reference key="15">
    <citation type="journal article" date="2021" name="Nat. Struct. Mol. Biol.">
        <title>Cryo-EM structures of human RNA polymerase III in its unbound and transcribing states.</title>
        <authorList>
            <person name="Girbig M."/>
            <person name="Misiaszek A.D."/>
            <person name="Vorlander M.K."/>
            <person name="Lafita A."/>
            <person name="Grotsch H."/>
            <person name="Baudin F."/>
            <person name="Bateman A."/>
            <person name="Muller C.W."/>
        </authorList>
    </citation>
    <scope>STRUCTURE BY ELECTRON MICROSCOPY (2.80 ANGSTROMS) IN COMPLEX WITH DNA-RNA HYBRID AND ZN(2+)</scope>
    <scope>FUNCTION</scope>
    <scope>CATALYTIC ACTIVITY</scope>
    <scope>SUBUNIT</scope>
</reference>
<reference key="16">
    <citation type="journal article" date="2021" name="Nat. Struct. Mol. Biol.">
        <title>Structural insights into transcriptional regulation of human RNA polymerase III.</title>
        <authorList>
            <person name="Wang Q."/>
            <person name="Li S."/>
            <person name="Wan F."/>
            <person name="Xu Y."/>
            <person name="Wu Z."/>
            <person name="Cao M."/>
            <person name="Lan P."/>
            <person name="Lei M."/>
            <person name="Wu J."/>
        </authorList>
    </citation>
    <scope>STRUCTURE BY ELECTRON MICROSCOPY (2.90 ANGSTROMS) IN COMPLEX WITH DNA-RNA HYBRID AND ZN(2+)</scope>
    <scope>FUNCTION</scope>
    <scope>SUBUNIT</scope>
</reference>
<reference key="17">
    <citation type="journal article" date="2011" name="Am. J. Hum. Genet.">
        <title>Mutations in POLR3A and POLR3B encoding RNA Polymerase III subunits cause an autosomal-recessive hypomyelinating leukoencephalopathy.</title>
        <authorList>
            <person name="Saitsu H."/>
            <person name="Osaka H."/>
            <person name="Sasaki M."/>
            <person name="Takanashi J."/>
            <person name="Hamada K."/>
            <person name="Yamashita A."/>
            <person name="Shibayama H."/>
            <person name="Shiina M."/>
            <person name="Kondo Y."/>
            <person name="Nishiyama K."/>
            <person name="Tsurusaki Y."/>
            <person name="Miyake N."/>
            <person name="Doi H."/>
            <person name="Ogata K."/>
            <person name="Inoue K."/>
            <person name="Matsumoto N."/>
        </authorList>
    </citation>
    <scope>VARIANTS HLD8 620-ASN--LYS-652 DEL; HIS-768 AND GLU-926</scope>
    <scope>INVOLVEMENT IN HLD8</scope>
</reference>
<reference key="18">
    <citation type="journal article" date="2011" name="Am. J. Hum. Genet.">
        <title>Recessive mutations in POLR3B, encoding the second largest subunit of Pol III, cause a rare hypomyelinating leukodystrophy.</title>
        <authorList>
            <person name="Tetreault M."/>
            <person name="Choquet K."/>
            <person name="Orcesi S."/>
            <person name="Tonduti D."/>
            <person name="Balottin U."/>
            <person name="Teichmann M."/>
            <person name="Fribourg S."/>
            <person name="Schiffmann R."/>
            <person name="Brais B."/>
            <person name="Vanderver A."/>
            <person name="Bernard G."/>
        </authorList>
    </citation>
    <scope>VARIANTS HLD8 LYS-503 AND GLU-523</scope>
</reference>
<reference key="19">
    <citation type="journal article" date="2013" name="J. Med. Genet.">
        <title>Mutations in POLR3A and POLR3B are a major cause of hypomyelinating leukodystrophies with or without dental abnormalities and/or hypogonadotropic hypogonadism.</title>
        <authorList>
            <person name="Daoud H."/>
            <person name="Tetreault M."/>
            <person name="Gibson W."/>
            <person name="Guerrero K."/>
            <person name="Cohen A."/>
            <person name="Gburek-Augustat J."/>
            <person name="Synofzik M."/>
            <person name="Brais B."/>
            <person name="Stevens C.A."/>
            <person name="Sanchez-Carpintero R."/>
            <person name="Goizet C."/>
            <person name="Naidu S."/>
            <person name="Vanderver A."/>
            <person name="Bernard G."/>
        </authorList>
    </citation>
    <scope>VARIANTS HLD8 PHE-104; GLY-268; CYS-442; GLU-523 AND ARG-527</scope>
</reference>
<reference key="20">
    <citation type="journal article" date="2021" name="Am. J. Hum. Genet.">
        <title>De novo variants in POLR3B cause ataxia, spasticity, and demyelinating neuropathy.</title>
        <authorList>
            <person name="Djordjevic D."/>
            <person name="Pinard M."/>
            <person name="Gauthier M.S."/>
            <person name="Smith-Hicks C."/>
            <person name="Hoffman T.L."/>
            <person name="Wolf N.I."/>
            <person name="Oegema R."/>
            <person name="van Binsbergen E."/>
            <person name="Baskin B."/>
            <person name="Bernard G."/>
            <person name="Fribourg S."/>
            <person name="Coulombe B."/>
            <person name="Yoon G."/>
        </authorList>
    </citation>
    <scope>VARIANTS CMT1I LYS-363; VAL-365; VAL-375; SER-426; ARG-462 AND HIS-1046</scope>
    <scope>CHARACTERIZATION OF VARIANTS CMT1I LYS-363; VAL-365; VAL-375; SER-426; ARG-462 AND HIS-1046</scope>
    <scope>INVOLVEMENT IN CMT1I</scope>
    <scope>SUBCELLULAR LOCATION</scope>
</reference>
<reference key="21">
    <citation type="journal article" date="2021" name="BMC Neurol.">
        <title>A de novo variant of POLR3B causes demyelinating Charcot-Marie-Tooth disease in a Chinese patient: a case report.</title>
        <authorList>
            <person name="Xue Y.Y."/>
            <person name="Cheng H.L."/>
            <person name="Dong H.L."/>
            <person name="Yin H.M."/>
            <person name="Yuan Y."/>
            <person name="Meng L.C."/>
            <person name="Wu Z.Y."/>
            <person name="Yu H."/>
        </authorList>
    </citation>
    <scope>VARIANT CMT1I HIS-1046</scope>
    <scope>INVOLVEMENT IN CMT1I</scope>
</reference>
<keyword id="KW-0002">3D-structure</keyword>
<keyword id="KW-0025">Alternative splicing</keyword>
<keyword id="KW-0051">Antiviral defense</keyword>
<keyword id="KW-0144">Charcot-Marie-Tooth disease</keyword>
<keyword id="KW-0963">Cytoplasm</keyword>
<keyword id="KW-0225">Disease variant</keyword>
<keyword id="KW-0240">DNA-directed RNA polymerase</keyword>
<keyword id="KW-0391">Immunity</keyword>
<keyword id="KW-0399">Innate immunity</keyword>
<keyword id="KW-1026">Leukodystrophy</keyword>
<keyword id="KW-0460">Magnesium</keyword>
<keyword id="KW-0479">Metal-binding</keyword>
<keyword id="KW-0523">Neurodegeneration</keyword>
<keyword id="KW-0622">Neuropathy</keyword>
<keyword id="KW-0548">Nucleotidyltransferase</keyword>
<keyword id="KW-0539">Nucleus</keyword>
<keyword id="KW-1267">Proteomics identification</keyword>
<keyword id="KW-1185">Reference proteome</keyword>
<keyword id="KW-0804">Transcription</keyword>
<keyword id="KW-0808">Transferase</keyword>
<keyword id="KW-0862">Zinc</keyword>
<keyword id="KW-0863">Zinc-finger</keyword>
<sequence>MDVLAEEFGNLTPEQLAAPIPTVEEKWRLLPAFLKVKGLVKQHIDSFNYFINVEIKKIMKANEKVTSDADPMWYLKYLNIYVGLPDVEESFNVTRPVSPHECRLRDMTYSAPITVDIEYTRGSQRIIRNALPIGRMPIMLRSSNCVLTGKTPAEFAKLNECPLDPGGYFIVKGVEKVILIQEQLSKNRIIVEADRKGAVGASVTSSTHEKKSRTNMAVKQGRFYLRHNTLSEDIPIVIIFKAMGVESDQEIVQMIGTEEHVMAAFGPSLEECQKAQIFTQMQALKYIGNKVRRQRMWGGGPKKTKIEEARELLASTILTHVPVKEFNFRAKCIYTAVMVRRVILAQGDNKVDDRDYYGNKRLELAGQLLSLLFEDLFKKFNSEMKKIADQVIPKQRAAQFDVVKHMRQDQITNGMVNAISTGNWSLKRFKMDRQGVTQVLSRLSYISALGMMTRISSQFEKTRKVSGPRSLQPSQWGMLCPSDTPEGEACGLVKNLALMTHITTDMEDGPIVKLASNLGVEDVNLLCGEELSYPNVFLVFLNGNILGVIRDHKKLVNTFRLMRRAGYINEFVSISTNLTDRCVYISSDGGRLCRPYIIVKKQKPAVTNKHMEELAQGYRNFEDFLHESLVEYLDVNEENDCNIALYEHTINKDTTHLEIEPFTLLGVCAGLIPYPHHNQSPRNTYQCAMGKQAMGTIGYNQRNRIDTLMYLLAYPQKPMVKTKTIELIEFEKLPAGQNATVAVMSYSGYDIEDALVLNKASLDRGFGRCLVYKNAKCTLKRYTNQTFDKVMGPMLDAATRKPIWRHEILDADGICSPGEKVENKQVLVNKSMPTVTQIPLEGSNVPQQPQYKDVPITYKGATDSYIEKVMISSNAEDAFLIKMLLRQTRRPEIGDKFSSRHGQKGVCGLIVPQEDMPFCDSGICPDIIMNPHGFPSRMTVGKLIELLAGKAGVLDGRFHYGTAFGGSKVKDVCEDLVRHGYNYLGKDYVTSGITGEPLEAYIYFGPVYYQKLKHMVLDKMHARARGPRAVLTRQPTEGRSRDGGLRLGEMERDCLIGYGASMLLLERLMISSDAFEVDVCGQCGLLGYSGWCHYCKSSCHVSSLRIPYACKLLFQELQSMNIIPRLKLSKYNE</sequence>
<gene>
    <name evidence="20" type="primary">POLR3B</name>
</gene>
<evidence type="ECO:0000250" key="1"/>
<evidence type="ECO:0000250" key="2">
    <source>
        <dbReference type="UniProtKB" id="P08518"/>
    </source>
</evidence>
<evidence type="ECO:0000250" key="3">
    <source>
        <dbReference type="UniProtKB" id="P30876"/>
    </source>
</evidence>
<evidence type="ECO:0000269" key="4">
    <source>
    </source>
</evidence>
<evidence type="ECO:0000269" key="5">
    <source>
    </source>
</evidence>
<evidence type="ECO:0000269" key="6">
    <source>
    </source>
</evidence>
<evidence type="ECO:0000269" key="7">
    <source>
    </source>
</evidence>
<evidence type="ECO:0000269" key="8">
    <source>
    </source>
</evidence>
<evidence type="ECO:0000269" key="9">
    <source>
    </source>
</evidence>
<evidence type="ECO:0000269" key="10">
    <source>
    </source>
</evidence>
<evidence type="ECO:0000269" key="11">
    <source>
    </source>
</evidence>
<evidence type="ECO:0000269" key="12">
    <source>
    </source>
</evidence>
<evidence type="ECO:0000269" key="13">
    <source>
    </source>
</evidence>
<evidence type="ECO:0000269" key="14">
    <source>
    </source>
</evidence>
<evidence type="ECO:0000269" key="15">
    <source>
    </source>
</evidence>
<evidence type="ECO:0000269" key="16">
    <source>
    </source>
</evidence>
<evidence type="ECO:0000303" key="17">
    <source>
    </source>
</evidence>
<evidence type="ECO:0000305" key="18"/>
<evidence type="ECO:0000305" key="19">
    <source>
    </source>
</evidence>
<evidence type="ECO:0000312" key="20">
    <source>
        <dbReference type="HGNC" id="HGNC:30348"/>
    </source>
</evidence>
<evidence type="ECO:0007744" key="21">
    <source>
        <dbReference type="PDB" id="7AE1"/>
    </source>
</evidence>
<evidence type="ECO:0007744" key="22">
    <source>
        <dbReference type="PDB" id="7D58"/>
    </source>
</evidence>
<evidence type="ECO:0007744" key="23">
    <source>
        <dbReference type="PDB" id="7DN3"/>
    </source>
</evidence>
<evidence type="ECO:0007744" key="24">
    <source>
        <dbReference type="PDB" id="7FJJ"/>
    </source>
</evidence>
<evidence type="ECO:0007829" key="25">
    <source>
        <dbReference type="PDB" id="7AE1"/>
    </source>
</evidence>
<evidence type="ECO:0007829" key="26">
    <source>
        <dbReference type="PDB" id="7AE3"/>
    </source>
</evidence>
<evidence type="ECO:0007829" key="27">
    <source>
        <dbReference type="PDB" id="7D58"/>
    </source>
</evidence>
<evidence type="ECO:0007829" key="28">
    <source>
        <dbReference type="PDB" id="7D59"/>
    </source>
</evidence>
<evidence type="ECO:0007829" key="29">
    <source>
        <dbReference type="PDB" id="7DU2"/>
    </source>
</evidence>
<evidence type="ECO:0007829" key="30">
    <source>
        <dbReference type="PDB" id="8IUH"/>
    </source>
</evidence>
<organism>
    <name type="scientific">Homo sapiens</name>
    <name type="common">Human</name>
    <dbReference type="NCBI Taxonomy" id="9606"/>
    <lineage>
        <taxon>Eukaryota</taxon>
        <taxon>Metazoa</taxon>
        <taxon>Chordata</taxon>
        <taxon>Craniata</taxon>
        <taxon>Vertebrata</taxon>
        <taxon>Euteleostomi</taxon>
        <taxon>Mammalia</taxon>
        <taxon>Eutheria</taxon>
        <taxon>Euarchontoglires</taxon>
        <taxon>Primates</taxon>
        <taxon>Haplorrhini</taxon>
        <taxon>Catarrhini</taxon>
        <taxon>Hominidae</taxon>
        <taxon>Homo</taxon>
    </lineage>
</organism>
<accession>Q9NW08</accession>
<accession>A8K6H0</accession>
<accession>B3KV73</accession>
<accession>F5H1E6</accession>
<accession>Q9NW59</accession>
<name>RPC2_HUMAN</name>
<comment type="function">
    <text evidence="1 4 5 6 10 12 13 14 16">Catalytic core component of RNA polymerase III (Pol III), a DNA-dependent RNA polymerase which synthesizes small non-coding RNAs using the four ribonucleoside triphosphates as substrates. Synthesizes 5S rRNA, snRNAs, tRNAs and miRNAs from at least 500 distinct genomic loci (PubMed:20413673, PubMed:33558766). Pol III-mediated transcription cycle proceeds through transcription initiation, transcription elongation and transcription termination stages. During transcription initiation, Pol III is recruited to DNA promoters type I, II or III with the help of general transcription factors and other specific initiation factors. Once the polymerase has escaped from the promoter it enters the elongation phase during which RNA is actively polymerized, based on complementarity with the template DNA strand. Transcription termination involves the release of the RNA transcript and polymerase from the DNA (PubMed:20413673, PubMed:33335104, PubMed:33558764, PubMed:33558766, PubMed:33674783, PubMed:34675218). Forms Pol III active center together with the largest subunit POLR3A/RPC1. A single-stranded DNA template strand of the promoter is positioned within the central active site cleft of Pol III. Appends one nucleotide at a time to the 3' end of the nascent RNA, with POLR3A/RPC1 contributing a Mg(2+)-coordinating DxDGD motif, and POLR3B/RPC2 participating in the coordination of a second Mg(2+) ion and providing lysine residues believed to facilitate Watson-Crick base pairing between the incoming nucleotide and template base. Typically, Mg(2+) ions direct a 5' nucleoside triphosphate to form a phosphodiester bond with the 3' hydroxyl of the preceding nucleotide of the nascent RNA, with the elimination of pyrophosphate (PubMed:19609254, PubMed:20413673, PubMed:33335104, PubMed:33558764, PubMed:33674783, PubMed:34675218). Pol III plays a key role in sensing and limiting infection by intracellular bacteria and DNA viruses. Acts as a nuclear and cytosolic DNA sensor involved in innate immune response. Can sense non-self dsDNA that serves as template for transcription into dsRNA. The non-self RNA polymerase III transcripts, such as Epstein-Barr virus-encoded RNAs (EBERs) induce type I interferon and NF-kappa-B through the RIG-I pathway.</text>
</comment>
<comment type="catalytic activity">
    <reaction evidence="4 10 12 16">
        <text>RNA(n) + a ribonucleoside 5'-triphosphate = RNA(n+1) + diphosphate</text>
        <dbReference type="Rhea" id="RHEA:21248"/>
        <dbReference type="Rhea" id="RHEA-COMP:14527"/>
        <dbReference type="Rhea" id="RHEA-COMP:17342"/>
        <dbReference type="ChEBI" id="CHEBI:33019"/>
        <dbReference type="ChEBI" id="CHEBI:61557"/>
        <dbReference type="ChEBI" id="CHEBI:140395"/>
        <dbReference type="EC" id="2.7.7.6"/>
    </reaction>
    <physiologicalReaction direction="left-to-right" evidence="4 10 12 16">
        <dbReference type="Rhea" id="RHEA:21249"/>
    </physiologicalReaction>
</comment>
<comment type="cofactor">
    <cofactor evidence="2 3">
        <name>Mg(2+)</name>
        <dbReference type="ChEBI" id="CHEBI:18420"/>
    </cofactor>
    <text evidence="2 3">Two Mg(2+) ions are coordinated by both the catalytic residues and the nucleic acid substrate to enhance substrate recognition and catalytic efficiency.</text>
</comment>
<comment type="subunit">
    <text evidence="5 10 12 13 14 16">Component of the RNA polymerase III (Pol III) complex consisting of 17 subunits: a ten-subunit catalytic core composed of POLR3A/RPC1, POLR3B/RPC2, POLR1C/RPAC1, POLR1D/RPAC2, POLR3K/RPC10, POLR2E/RPABC1, POLR2F/RPABC2, POLR2H/RPABC3, POLR2K/RPABC4 and POLR2L/RPABC5; a mobile stalk composed of two subunits POLR3H/RPC8 and CRCP/RPC9, protruding from the core and functioning primarily in transcription initiation; and additional subunits homologous to general transcription factors of the RNA polymerase II machinery, POLR3C/RPC3-POLR3F/RPC6-POLR3G/RPC7 heterotrimer required for transcription initiation and POLR3D/RPC4-POLR3E/RPC5 heterodimer involved in both transcription initiation and termination.</text>
</comment>
<comment type="subcellular location">
    <subcellularLocation>
        <location evidence="10 11">Nucleus</location>
    </subcellularLocation>
    <subcellularLocation>
        <location evidence="10">Cytoplasm</location>
        <location evidence="10">Cytosol</location>
    </subcellularLocation>
</comment>
<comment type="alternative products">
    <event type="alternative splicing"/>
    <isoform>
        <id>Q9NW08-1</id>
        <name>1</name>
        <sequence type="displayed"/>
    </isoform>
    <isoform>
        <id>Q9NW08-2</id>
        <name>2</name>
        <sequence type="described" ref="VSP_045286"/>
    </isoform>
</comment>
<comment type="disease" evidence="7 8 9">
    <disease id="DI-03308">
        <name>Leukodystrophy, hypomyelinating, 8, with or without oligodontia and/or hypogonadotropic hypogonadism</name>
        <acronym>HLD8</acronym>
        <description>An autosomal recessive neurodegenerative disorder characterized by early childhood onset of cerebellar ataxia and mild intellectual disabilities associated with diffuse hypomyelination apparent on brain MRI. Variable features include oligodontia and/or hypogonadotropic hypogonadism.</description>
        <dbReference type="MIM" id="614381"/>
    </disease>
    <text>The disease is caused by variants affecting the gene represented in this entry.</text>
</comment>
<comment type="disease" evidence="11 15">
    <disease id="DI-06335">
        <name>Charcot-Marie-Tooth disease, demyelinating, type 1I</name>
        <acronym>CMT1I</acronym>
        <description>An autosomal dominant demyelinating form of Charcot-Marie-Tooth disease, a disorder of the peripheral nervous system, characterized by progressive weakness and atrophy, initially of the peroneal muscles and later of the distal muscles of the arms. Charcot-Marie-Tooth disease is classified in two main groups on the basis of electrophysiologic properties and histopathology: primary peripheral demyelinating neuropathies (designated CMT1 when they are dominantly inherited) and primary peripheral axonal neuropathies (CMT2). Demyelinating neuropathies are characterized by severely reduced nerve conduction velocities (less than 38 m/sec), segmental demyelination and remyelination with onion bulb formations on nerve biopsy, slowly progressive distal muscle atrophy and weakness, absent deep tendon reflexes, and hollow feet. CMT1I is characterized predominantly by delayed motor development in the first years of life associated with gait abnormalities, sensory ataxia, hyporeflexia, and distal sensory impairment due to a sensorimotor peripheral neuropathy that mainly affects the lower limbs. The disorder is progressive, and some may have upper limb involvement. A subset of patients has central nervous system involvement that manifests as global developmental delay with impaired intellectual development and speech difficulties.</description>
        <dbReference type="MIM" id="619742"/>
    </disease>
    <text>The disease is caused by variants affecting the gene represented in this entry.</text>
</comment>
<comment type="similarity">
    <text evidence="18">Belongs to the RNA polymerase beta chain family.</text>
</comment>
<comment type="sequence caution" evidence="18">
    <conflict type="erroneous initiation">
        <sequence resource="EMBL-CDS" id="BAA91527"/>
    </conflict>
    <text>Truncated N-terminus.</text>
</comment>
<comment type="sequence caution" evidence="18">
    <conflict type="erroneous initiation">
        <sequence resource="EMBL-CDS" id="BAA91581"/>
    </conflict>
    <text>Truncated N-terminus.</text>
</comment>
<proteinExistence type="evidence at protein level"/>
<dbReference type="EC" id="2.7.7.6" evidence="4 10 12 16"/>
<dbReference type="EMBL" id="AY092084">
    <property type="protein sequence ID" value="AAM18214.1"/>
    <property type="molecule type" value="mRNA"/>
</dbReference>
<dbReference type="EMBL" id="AK001161">
    <property type="protein sequence ID" value="BAA91527.1"/>
    <property type="status" value="ALT_INIT"/>
    <property type="molecule type" value="mRNA"/>
</dbReference>
<dbReference type="EMBL" id="AK001250">
    <property type="protein sequence ID" value="BAA91581.1"/>
    <property type="status" value="ALT_INIT"/>
    <property type="molecule type" value="mRNA"/>
</dbReference>
<dbReference type="EMBL" id="AK122713">
    <property type="protein sequence ID" value="BAG53685.1"/>
    <property type="molecule type" value="mRNA"/>
</dbReference>
<dbReference type="EMBL" id="AK291635">
    <property type="protein sequence ID" value="BAF84324.1"/>
    <property type="molecule type" value="mRNA"/>
</dbReference>
<dbReference type="EMBL" id="AC009721">
    <property type="status" value="NOT_ANNOTATED_CDS"/>
    <property type="molecule type" value="Genomic_DNA"/>
</dbReference>
<dbReference type="EMBL" id="AC078992">
    <property type="status" value="NOT_ANNOTATED_CDS"/>
    <property type="molecule type" value="Genomic_DNA"/>
</dbReference>
<dbReference type="EMBL" id="AC080012">
    <property type="status" value="NOT_ANNOTATED_CDS"/>
    <property type="molecule type" value="Genomic_DNA"/>
</dbReference>
<dbReference type="EMBL" id="CH471054">
    <property type="protein sequence ID" value="EAW97780.1"/>
    <property type="molecule type" value="Genomic_DNA"/>
</dbReference>
<dbReference type="EMBL" id="BC046238">
    <property type="protein sequence ID" value="AAH46238.1"/>
    <property type="molecule type" value="mRNA"/>
</dbReference>
<dbReference type="CCDS" id="CCDS53824.1">
    <molecule id="Q9NW08-2"/>
</dbReference>
<dbReference type="CCDS" id="CCDS9105.1">
    <molecule id="Q9NW08-1"/>
</dbReference>
<dbReference type="RefSeq" id="NP_001154180.1">
    <molecule id="Q9NW08-2"/>
    <property type="nucleotide sequence ID" value="NM_001160708.2"/>
</dbReference>
<dbReference type="RefSeq" id="NP_060552.4">
    <molecule id="Q9NW08-1"/>
    <property type="nucleotide sequence ID" value="NM_018082.5"/>
</dbReference>
<dbReference type="PDB" id="7A6H">
    <property type="method" value="EM"/>
    <property type="resolution" value="3.30 A"/>
    <property type="chains" value="B=1-1133"/>
</dbReference>
<dbReference type="PDB" id="7AE1">
    <property type="method" value="EM"/>
    <property type="resolution" value="2.80 A"/>
    <property type="chains" value="B=1-1133"/>
</dbReference>
<dbReference type="PDB" id="7AE3">
    <property type="method" value="EM"/>
    <property type="resolution" value="3.10 A"/>
    <property type="chains" value="B=1-1133"/>
</dbReference>
<dbReference type="PDB" id="7AEA">
    <property type="method" value="EM"/>
    <property type="resolution" value="3.40 A"/>
    <property type="chains" value="B=1-1133"/>
</dbReference>
<dbReference type="PDB" id="7AST">
    <property type="method" value="EM"/>
    <property type="resolution" value="4.00 A"/>
    <property type="chains" value="M=1-1133"/>
</dbReference>
<dbReference type="PDB" id="7D58">
    <property type="method" value="EM"/>
    <property type="resolution" value="2.90 A"/>
    <property type="chains" value="B=1-1133"/>
</dbReference>
<dbReference type="PDB" id="7D59">
    <property type="method" value="EM"/>
    <property type="resolution" value="3.10 A"/>
    <property type="chains" value="B=1-1133"/>
</dbReference>
<dbReference type="PDB" id="7DN3">
    <property type="method" value="EM"/>
    <property type="resolution" value="3.50 A"/>
    <property type="chains" value="B=1-1133"/>
</dbReference>
<dbReference type="PDB" id="7DU2">
    <property type="method" value="EM"/>
    <property type="resolution" value="3.35 A"/>
    <property type="chains" value="B=1-1133"/>
</dbReference>
<dbReference type="PDB" id="7FJI">
    <property type="method" value="EM"/>
    <property type="resolution" value="3.60 A"/>
    <property type="chains" value="B=1-1133"/>
</dbReference>
<dbReference type="PDB" id="7FJJ">
    <property type="method" value="EM"/>
    <property type="resolution" value="3.60 A"/>
    <property type="chains" value="B=1-1133"/>
</dbReference>
<dbReference type="PDB" id="8ITY">
    <property type="method" value="EM"/>
    <property type="resolution" value="3.90 A"/>
    <property type="chains" value="B=1-1133"/>
</dbReference>
<dbReference type="PDB" id="8IUE">
    <property type="method" value="EM"/>
    <property type="resolution" value="4.10 A"/>
    <property type="chains" value="B=1-1133"/>
</dbReference>
<dbReference type="PDB" id="8IUH">
    <property type="method" value="EM"/>
    <property type="resolution" value="3.40 A"/>
    <property type="chains" value="B=1-1133"/>
</dbReference>
<dbReference type="PDB" id="9FSO">
    <property type="method" value="EM"/>
    <property type="resolution" value="3.28 A"/>
    <property type="chains" value="B=1-1133"/>
</dbReference>
<dbReference type="PDB" id="9FSP">
    <property type="method" value="EM"/>
    <property type="resolution" value="3.39 A"/>
    <property type="chains" value="B=1-1133"/>
</dbReference>
<dbReference type="PDB" id="9FSQ">
    <property type="method" value="EM"/>
    <property type="resolution" value="3.51 A"/>
    <property type="chains" value="B=1-1133"/>
</dbReference>
<dbReference type="PDB" id="9FSR">
    <property type="method" value="EM"/>
    <property type="resolution" value="3.76 A"/>
    <property type="chains" value="B=1-1133"/>
</dbReference>
<dbReference type="PDB" id="9FSS">
    <property type="method" value="EM"/>
    <property type="resolution" value="4.14 A"/>
    <property type="chains" value="B=1-1133"/>
</dbReference>
<dbReference type="PDBsum" id="7A6H"/>
<dbReference type="PDBsum" id="7AE1"/>
<dbReference type="PDBsum" id="7AE3"/>
<dbReference type="PDBsum" id="7AEA"/>
<dbReference type="PDBsum" id="7AST"/>
<dbReference type="PDBsum" id="7D58"/>
<dbReference type="PDBsum" id="7D59"/>
<dbReference type="PDBsum" id="7DN3"/>
<dbReference type="PDBsum" id="7DU2"/>
<dbReference type="PDBsum" id="7FJI"/>
<dbReference type="PDBsum" id="7FJJ"/>
<dbReference type="PDBsum" id="8ITY"/>
<dbReference type="PDBsum" id="8IUE"/>
<dbReference type="PDBsum" id="8IUH"/>
<dbReference type="PDBsum" id="9FSO"/>
<dbReference type="PDBsum" id="9FSP"/>
<dbReference type="PDBsum" id="9FSQ"/>
<dbReference type="PDBsum" id="9FSR"/>
<dbReference type="PDBsum" id="9FSS"/>
<dbReference type="EMDB" id="EMD-11673"/>
<dbReference type="EMDB" id="EMD-11736"/>
<dbReference type="EMDB" id="EMD-11738"/>
<dbReference type="EMDB" id="EMD-11742"/>
<dbReference type="EMDB" id="EMD-11904"/>
<dbReference type="EMDB" id="EMD-30577"/>
<dbReference type="EMDB" id="EMD-30578"/>
<dbReference type="EMDB" id="EMD-30779"/>
<dbReference type="EMDB" id="EMD-30865"/>
<dbReference type="EMDB" id="EMD-31621"/>
<dbReference type="EMDB" id="EMD-31622"/>
<dbReference type="EMDB" id="EMD-35712"/>
<dbReference type="EMDB" id="EMD-35719"/>
<dbReference type="EMDB" id="EMD-35722"/>
<dbReference type="EMDB" id="EMD-50730"/>
<dbReference type="EMDB" id="EMD-50731"/>
<dbReference type="EMDB" id="EMD-50732"/>
<dbReference type="EMDB" id="EMD-50733"/>
<dbReference type="EMDB" id="EMD-50734"/>
<dbReference type="SMR" id="Q9NW08"/>
<dbReference type="BioGRID" id="120828">
    <property type="interactions" value="138"/>
</dbReference>
<dbReference type="ComplexPortal" id="CPX-2393">
    <property type="entry name" value="DNA-directed RNA polymerase III complex, POLR3G variant"/>
</dbReference>
<dbReference type="ComplexPortal" id="CPX-7482">
    <property type="entry name" value="DNA-directed RNA polymerase III complex, POLR3GL variant"/>
</dbReference>
<dbReference type="CORUM" id="Q9NW08"/>
<dbReference type="FunCoup" id="Q9NW08">
    <property type="interactions" value="3351"/>
</dbReference>
<dbReference type="IntAct" id="Q9NW08">
    <property type="interactions" value="60"/>
</dbReference>
<dbReference type="MINT" id="Q9NW08"/>
<dbReference type="STRING" id="9606.ENSP00000228347"/>
<dbReference type="GlyGen" id="Q9NW08">
    <property type="glycosylation" value="1 site, 1 O-linked glycan (1 site)"/>
</dbReference>
<dbReference type="iPTMnet" id="Q9NW08"/>
<dbReference type="MetOSite" id="Q9NW08"/>
<dbReference type="PhosphoSitePlus" id="Q9NW08"/>
<dbReference type="SwissPalm" id="Q9NW08"/>
<dbReference type="BioMuta" id="POLR3B"/>
<dbReference type="DMDM" id="29428029"/>
<dbReference type="jPOST" id="Q9NW08"/>
<dbReference type="MassIVE" id="Q9NW08"/>
<dbReference type="PaxDb" id="9606-ENSP00000228347"/>
<dbReference type="PeptideAtlas" id="Q9NW08"/>
<dbReference type="ProteomicsDB" id="25631"/>
<dbReference type="ProteomicsDB" id="82885">
    <molecule id="Q9NW08-1"/>
</dbReference>
<dbReference type="Pumba" id="Q9NW08"/>
<dbReference type="Antibodypedia" id="30662">
    <property type="antibodies" value="169 antibodies from 28 providers"/>
</dbReference>
<dbReference type="DNASU" id="55703"/>
<dbReference type="Ensembl" id="ENST00000228347.9">
    <molecule id="Q9NW08-1"/>
    <property type="protein sequence ID" value="ENSP00000228347.4"/>
    <property type="gene ID" value="ENSG00000013503.10"/>
</dbReference>
<dbReference type="Ensembl" id="ENST00000539066.5">
    <molecule id="Q9NW08-2"/>
    <property type="protein sequence ID" value="ENSP00000445721.1"/>
    <property type="gene ID" value="ENSG00000013503.10"/>
</dbReference>
<dbReference type="GeneID" id="55703"/>
<dbReference type="KEGG" id="hsa:55703"/>
<dbReference type="MANE-Select" id="ENST00000228347.9">
    <property type="protein sequence ID" value="ENSP00000228347.4"/>
    <property type="RefSeq nucleotide sequence ID" value="NM_018082.6"/>
    <property type="RefSeq protein sequence ID" value="NP_060552.4"/>
</dbReference>
<dbReference type="UCSC" id="uc001tlp.3">
    <molecule id="Q9NW08-1"/>
    <property type="organism name" value="human"/>
</dbReference>
<dbReference type="AGR" id="HGNC:30348"/>
<dbReference type="CTD" id="55703"/>
<dbReference type="DisGeNET" id="55703"/>
<dbReference type="GeneCards" id="POLR3B"/>
<dbReference type="GeneReviews" id="POLR3B"/>
<dbReference type="HGNC" id="HGNC:30348">
    <property type="gene designation" value="POLR3B"/>
</dbReference>
<dbReference type="HPA" id="ENSG00000013503">
    <property type="expression patterns" value="Low tissue specificity"/>
</dbReference>
<dbReference type="MalaCards" id="POLR3B"/>
<dbReference type="MIM" id="614366">
    <property type="type" value="gene"/>
</dbReference>
<dbReference type="MIM" id="614381">
    <property type="type" value="phenotype"/>
</dbReference>
<dbReference type="MIM" id="619742">
    <property type="type" value="phenotype"/>
</dbReference>
<dbReference type="neXtProt" id="NX_Q9NW08"/>
<dbReference type="OpenTargets" id="ENSG00000013503"/>
<dbReference type="Orphanet" id="85186">
    <property type="disease" value="Endosteal sclerosis-cerebellar hypoplasia syndrome"/>
</dbReference>
<dbReference type="Orphanet" id="88637">
    <property type="disease" value="Hypomyelination-hypogonadotropic hypogonadism-hypodontia syndrome"/>
</dbReference>
<dbReference type="PharmGKB" id="PA134867680"/>
<dbReference type="VEuPathDB" id="HostDB:ENSG00000013503"/>
<dbReference type="eggNOG" id="KOG0215">
    <property type="taxonomic scope" value="Eukaryota"/>
</dbReference>
<dbReference type="GeneTree" id="ENSGT00950000183132"/>
<dbReference type="HOGENOM" id="CLU_000524_5_1_1"/>
<dbReference type="InParanoid" id="Q9NW08"/>
<dbReference type="OMA" id="LAYCSWC"/>
<dbReference type="OrthoDB" id="10248617at2759"/>
<dbReference type="PAN-GO" id="Q9NW08">
    <property type="GO annotations" value="2 GO annotations based on evolutionary models"/>
</dbReference>
<dbReference type="PhylomeDB" id="Q9NW08"/>
<dbReference type="TreeFam" id="TF103047"/>
<dbReference type="PathwayCommons" id="Q9NW08"/>
<dbReference type="Reactome" id="R-HSA-1834949">
    <property type="pathway name" value="Cytosolic sensors of pathogen-associated DNA"/>
</dbReference>
<dbReference type="Reactome" id="R-HSA-73780">
    <property type="pathway name" value="RNA Polymerase III Chain Elongation"/>
</dbReference>
<dbReference type="Reactome" id="R-HSA-73980">
    <property type="pathway name" value="RNA Polymerase III Transcription Termination"/>
</dbReference>
<dbReference type="Reactome" id="R-HSA-749476">
    <property type="pathway name" value="RNA Polymerase III Abortive And Retractive Initiation"/>
</dbReference>
<dbReference type="Reactome" id="R-HSA-76061">
    <property type="pathway name" value="RNA Polymerase III Transcription Initiation From Type 1 Promoter"/>
</dbReference>
<dbReference type="Reactome" id="R-HSA-76066">
    <property type="pathway name" value="RNA Polymerase III Transcription Initiation From Type 2 Promoter"/>
</dbReference>
<dbReference type="Reactome" id="R-HSA-76071">
    <property type="pathway name" value="RNA Polymerase III Transcription Initiation From Type 3 Promoter"/>
</dbReference>
<dbReference type="SignaLink" id="Q9NW08"/>
<dbReference type="SIGNOR" id="Q9NW08"/>
<dbReference type="BioGRID-ORCS" id="55703">
    <property type="hits" value="834 hits in 1173 CRISPR screens"/>
</dbReference>
<dbReference type="ChiTaRS" id="POLR3B">
    <property type="organism name" value="human"/>
</dbReference>
<dbReference type="GenomeRNAi" id="55703"/>
<dbReference type="Pharos" id="Q9NW08">
    <property type="development level" value="Tbio"/>
</dbReference>
<dbReference type="PRO" id="PR:Q9NW08"/>
<dbReference type="Proteomes" id="UP000005640">
    <property type="component" value="Chromosome 12"/>
</dbReference>
<dbReference type="RNAct" id="Q9NW08">
    <property type="molecule type" value="protein"/>
</dbReference>
<dbReference type="Bgee" id="ENSG00000013503">
    <property type="expression patterns" value="Expressed in secondary oocyte and 165 other cell types or tissues"/>
</dbReference>
<dbReference type="ExpressionAtlas" id="Q9NW08">
    <property type="expression patterns" value="baseline and differential"/>
</dbReference>
<dbReference type="GO" id="GO:0005737">
    <property type="term" value="C:cytoplasm"/>
    <property type="evidence" value="ECO:0000314"/>
    <property type="project" value="UniProtKB"/>
</dbReference>
<dbReference type="GO" id="GO:0005829">
    <property type="term" value="C:cytosol"/>
    <property type="evidence" value="ECO:0000304"/>
    <property type="project" value="Reactome"/>
</dbReference>
<dbReference type="GO" id="GO:0005739">
    <property type="term" value="C:mitochondrion"/>
    <property type="evidence" value="ECO:0007669"/>
    <property type="project" value="GOC"/>
</dbReference>
<dbReference type="GO" id="GO:0005654">
    <property type="term" value="C:nucleoplasm"/>
    <property type="evidence" value="ECO:0000304"/>
    <property type="project" value="Reactome"/>
</dbReference>
<dbReference type="GO" id="GO:0005666">
    <property type="term" value="C:RNA polymerase III complex"/>
    <property type="evidence" value="ECO:0000314"/>
    <property type="project" value="UniProtKB"/>
</dbReference>
<dbReference type="GO" id="GO:0003677">
    <property type="term" value="F:DNA binding"/>
    <property type="evidence" value="ECO:0007669"/>
    <property type="project" value="InterPro"/>
</dbReference>
<dbReference type="GO" id="GO:0003899">
    <property type="term" value="F:DNA-directed RNA polymerase activity"/>
    <property type="evidence" value="ECO:0000314"/>
    <property type="project" value="UniProtKB"/>
</dbReference>
<dbReference type="GO" id="GO:0071667">
    <property type="term" value="F:DNA/RNA hybrid binding"/>
    <property type="evidence" value="ECO:0000314"/>
    <property type="project" value="UniProtKB"/>
</dbReference>
<dbReference type="GO" id="GO:0032549">
    <property type="term" value="F:ribonucleoside binding"/>
    <property type="evidence" value="ECO:0007669"/>
    <property type="project" value="InterPro"/>
</dbReference>
<dbReference type="GO" id="GO:0008270">
    <property type="term" value="F:zinc ion binding"/>
    <property type="evidence" value="ECO:0000314"/>
    <property type="project" value="UniProtKB"/>
</dbReference>
<dbReference type="GO" id="GO:0051607">
    <property type="term" value="P:defense response to virus"/>
    <property type="evidence" value="ECO:0007669"/>
    <property type="project" value="UniProtKB-KW"/>
</dbReference>
<dbReference type="GO" id="GO:0045087">
    <property type="term" value="P:innate immune response"/>
    <property type="evidence" value="ECO:0007669"/>
    <property type="project" value="UniProtKB-KW"/>
</dbReference>
<dbReference type="GO" id="GO:0045089">
    <property type="term" value="P:positive regulation of innate immune response"/>
    <property type="evidence" value="ECO:0000315"/>
    <property type="project" value="UniProtKB"/>
</dbReference>
<dbReference type="GO" id="GO:0032728">
    <property type="term" value="P:positive regulation of interferon-beta production"/>
    <property type="evidence" value="ECO:0000315"/>
    <property type="project" value="UniProtKB"/>
</dbReference>
<dbReference type="GO" id="GO:0042796">
    <property type="term" value="P:snRNA transcription by RNA polymerase III"/>
    <property type="evidence" value="ECO:0000314"/>
    <property type="project" value="UniProtKB"/>
</dbReference>
<dbReference type="CDD" id="cd00653">
    <property type="entry name" value="RNA_pol_B_RPB2"/>
    <property type="match status" value="1"/>
</dbReference>
<dbReference type="FunFam" id="2.40.270.10:FF:000006">
    <property type="entry name" value="DNA-directed RNA polymerase subunit beta"/>
    <property type="match status" value="1"/>
</dbReference>
<dbReference type="FunFam" id="2.40.270.10:FF:000011">
    <property type="entry name" value="DNA-directed RNA polymerase subunit beta"/>
    <property type="match status" value="1"/>
</dbReference>
<dbReference type="FunFam" id="2.40.50.150:FF:000003">
    <property type="entry name" value="DNA-directed RNA polymerase subunit beta"/>
    <property type="match status" value="1"/>
</dbReference>
<dbReference type="FunFam" id="3.90.1070.20:FF:000002">
    <property type="entry name" value="DNA-directed RNA polymerase subunit beta"/>
    <property type="match status" value="1"/>
</dbReference>
<dbReference type="FunFam" id="3.90.1100.10:FF:000004">
    <property type="entry name" value="DNA-directed RNA polymerase subunit beta"/>
    <property type="match status" value="1"/>
</dbReference>
<dbReference type="FunFam" id="3.90.1100.10:FF:000006">
    <property type="entry name" value="DNA-directed RNA polymerase subunit beta"/>
    <property type="match status" value="1"/>
</dbReference>
<dbReference type="FunFam" id="3.90.1110.10:FF:000006">
    <property type="entry name" value="DNA-directed RNA polymerase subunit beta"/>
    <property type="match status" value="1"/>
</dbReference>
<dbReference type="FunFam" id="3.90.1800.10:FF:000003">
    <property type="entry name" value="DNA-directed RNA polymerase subunit beta"/>
    <property type="match status" value="1"/>
</dbReference>
<dbReference type="Gene3D" id="2.40.50.150">
    <property type="match status" value="1"/>
</dbReference>
<dbReference type="Gene3D" id="3.90.1100.10">
    <property type="match status" value="2"/>
</dbReference>
<dbReference type="Gene3D" id="2.40.270.10">
    <property type="entry name" value="DNA-directed RNA polymerase, subunit 2, domain 6"/>
    <property type="match status" value="1"/>
</dbReference>
<dbReference type="Gene3D" id="3.90.1800.10">
    <property type="entry name" value="RNA polymerase alpha subunit dimerisation domain"/>
    <property type="match status" value="1"/>
</dbReference>
<dbReference type="InterPro" id="IPR015712">
    <property type="entry name" value="DNA-dir_RNA_pol_su2"/>
</dbReference>
<dbReference type="InterPro" id="IPR007120">
    <property type="entry name" value="DNA-dir_RNAP_su2_dom"/>
</dbReference>
<dbReference type="InterPro" id="IPR037033">
    <property type="entry name" value="DNA-dir_RNAP_su2_hyb_sf"/>
</dbReference>
<dbReference type="InterPro" id="IPR007121">
    <property type="entry name" value="RNA_pol_bsu_CS"/>
</dbReference>
<dbReference type="InterPro" id="IPR007644">
    <property type="entry name" value="RNA_pol_bsu_protrusion"/>
</dbReference>
<dbReference type="InterPro" id="IPR007642">
    <property type="entry name" value="RNA_pol_Rpb2_2"/>
</dbReference>
<dbReference type="InterPro" id="IPR007645">
    <property type="entry name" value="RNA_pol_Rpb2_3"/>
</dbReference>
<dbReference type="InterPro" id="IPR007646">
    <property type="entry name" value="RNA_pol_Rpb2_4"/>
</dbReference>
<dbReference type="InterPro" id="IPR007647">
    <property type="entry name" value="RNA_pol_Rpb2_5"/>
</dbReference>
<dbReference type="InterPro" id="IPR007641">
    <property type="entry name" value="RNA_pol_Rpb2_7"/>
</dbReference>
<dbReference type="InterPro" id="IPR014724">
    <property type="entry name" value="RNA_pol_RPB2_OB-fold"/>
</dbReference>
<dbReference type="NCBIfam" id="NF007175">
    <property type="entry name" value="PRK09606.1"/>
    <property type="match status" value="1"/>
</dbReference>
<dbReference type="PANTHER" id="PTHR20856">
    <property type="entry name" value="DNA-DIRECTED RNA POLYMERASE I SUBUNIT 2"/>
    <property type="match status" value="1"/>
</dbReference>
<dbReference type="Pfam" id="PF04563">
    <property type="entry name" value="RNA_pol_Rpb2_1"/>
    <property type="match status" value="1"/>
</dbReference>
<dbReference type="Pfam" id="PF04561">
    <property type="entry name" value="RNA_pol_Rpb2_2"/>
    <property type="match status" value="1"/>
</dbReference>
<dbReference type="Pfam" id="PF04565">
    <property type="entry name" value="RNA_pol_Rpb2_3"/>
    <property type="match status" value="1"/>
</dbReference>
<dbReference type="Pfam" id="PF04566">
    <property type="entry name" value="RNA_pol_Rpb2_4"/>
    <property type="match status" value="1"/>
</dbReference>
<dbReference type="Pfam" id="PF04567">
    <property type="entry name" value="RNA_pol_Rpb2_5"/>
    <property type="match status" value="1"/>
</dbReference>
<dbReference type="Pfam" id="PF00562">
    <property type="entry name" value="RNA_pol_Rpb2_6"/>
    <property type="match status" value="1"/>
</dbReference>
<dbReference type="Pfam" id="PF04560">
    <property type="entry name" value="RNA_pol_Rpb2_7"/>
    <property type="match status" value="1"/>
</dbReference>
<dbReference type="SUPFAM" id="SSF64484">
    <property type="entry name" value="beta and beta-prime subunits of DNA dependent RNA-polymerase"/>
    <property type="match status" value="1"/>
</dbReference>
<dbReference type="PROSITE" id="PS01166">
    <property type="entry name" value="RNA_POL_BETA"/>
    <property type="match status" value="1"/>
</dbReference>